<keyword id="KW-1185">Reference proteome</keyword>
<proteinExistence type="predicted"/>
<dbReference type="EMBL" id="CP000304">
    <property type="protein sequence ID" value="ABP80533.1"/>
    <property type="molecule type" value="Genomic_DNA"/>
</dbReference>
<dbReference type="RefSeq" id="WP_011913989.1">
    <property type="nucleotide sequence ID" value="NC_009434.1"/>
</dbReference>
<dbReference type="SMR" id="A4VNI2"/>
<dbReference type="KEGG" id="psa:PST_2887"/>
<dbReference type="eggNOG" id="COG4249">
    <property type="taxonomic scope" value="Bacteria"/>
</dbReference>
<dbReference type="HOGENOM" id="CLU_174765_1_1_6"/>
<dbReference type="Proteomes" id="UP000000233">
    <property type="component" value="Chromosome"/>
</dbReference>
<dbReference type="InterPro" id="IPR025309">
    <property type="entry name" value="KTSC_dom"/>
</dbReference>
<dbReference type="Pfam" id="PF13619">
    <property type="entry name" value="KTSC"/>
    <property type="match status" value="1"/>
</dbReference>
<gene>
    <name type="ordered locus">PST_2887</name>
</gene>
<protein>
    <recommendedName>
        <fullName>Uncharacterized protein PST_2887</fullName>
    </recommendedName>
</protein>
<reference key="1">
    <citation type="journal article" date="2008" name="Proc. Natl. Acad. Sci. U.S.A.">
        <title>Nitrogen fixation island and rhizosphere competence traits in the genome of root-associated Pseudomonas stutzeri A1501.</title>
        <authorList>
            <person name="Yan Y."/>
            <person name="Yang J."/>
            <person name="Dou Y."/>
            <person name="Chen M."/>
            <person name="Ping S."/>
            <person name="Peng J."/>
            <person name="Lu W."/>
            <person name="Zhang W."/>
            <person name="Yao Z."/>
            <person name="Li H."/>
            <person name="Liu W."/>
            <person name="He S."/>
            <person name="Geng L."/>
            <person name="Zhang X."/>
            <person name="Yang F."/>
            <person name="Yu H."/>
            <person name="Zhan Y."/>
            <person name="Li D."/>
            <person name="Lin Z."/>
            <person name="Wang Y."/>
            <person name="Elmerich C."/>
            <person name="Lin M."/>
            <person name="Jin Q."/>
        </authorList>
    </citation>
    <scope>NUCLEOTIDE SEQUENCE [LARGE SCALE GENOMIC DNA]</scope>
    <source>
        <strain>A1501</strain>
    </source>
</reference>
<feature type="chain" id="PRO_0000404095" description="Uncharacterized protein PST_2887">
    <location>
        <begin position="1"/>
        <end position="71"/>
    </location>
</feature>
<accession>A4VNI2</accession>
<organism>
    <name type="scientific">Stutzerimonas stutzeri (strain A1501)</name>
    <name type="common">Pseudomonas stutzeri</name>
    <dbReference type="NCBI Taxonomy" id="379731"/>
    <lineage>
        <taxon>Bacteria</taxon>
        <taxon>Pseudomonadati</taxon>
        <taxon>Pseudomonadota</taxon>
        <taxon>Gammaproteobacteria</taxon>
        <taxon>Pseudomonadales</taxon>
        <taxon>Pseudomonadaceae</taxon>
        <taxon>Stutzerimonas</taxon>
    </lineage>
</organism>
<sequence length="71" mass="8314">MKRVALQSSSLRSLGYDPEQQILEVEFSSGALYRYEAVPPEVVQALLEADSLGRHFNQVFKPQHYRYWRID</sequence>
<name>Y2887_STUS1</name>